<reference key="1">
    <citation type="journal article" date="2003" name="Proc. Natl. Acad. Sci. U.S.A.">
        <title>The complete genome sequence of Mycobacterium bovis.</title>
        <authorList>
            <person name="Garnier T."/>
            <person name="Eiglmeier K."/>
            <person name="Camus J.-C."/>
            <person name="Medina N."/>
            <person name="Mansoor H."/>
            <person name="Pryor M."/>
            <person name="Duthoy S."/>
            <person name="Grondin S."/>
            <person name="Lacroix C."/>
            <person name="Monsempe C."/>
            <person name="Simon S."/>
            <person name="Harris B."/>
            <person name="Atkin R."/>
            <person name="Doggett J."/>
            <person name="Mayes R."/>
            <person name="Keating L."/>
            <person name="Wheeler P.R."/>
            <person name="Parkhill J."/>
            <person name="Barrell B.G."/>
            <person name="Cole S.T."/>
            <person name="Gordon S.V."/>
            <person name="Hewinson R.G."/>
        </authorList>
    </citation>
    <scope>NUCLEOTIDE SEQUENCE [LARGE SCALE GENOMIC DNA]</scope>
    <source>
        <strain>ATCC BAA-935 / AF2122/97</strain>
    </source>
</reference>
<reference key="2">
    <citation type="journal article" date="2017" name="Genome Announc.">
        <title>Updated reference genome sequence and annotation of Mycobacterium bovis AF2122/97.</title>
        <authorList>
            <person name="Malone K.M."/>
            <person name="Farrell D."/>
            <person name="Stuber T.P."/>
            <person name="Schubert O.T."/>
            <person name="Aebersold R."/>
            <person name="Robbe-Austerman S."/>
            <person name="Gordon S.V."/>
        </authorList>
    </citation>
    <scope>NUCLEOTIDE SEQUENCE [LARGE SCALE GENOMIC DNA]</scope>
    <scope>GENOME REANNOTATION</scope>
    <source>
        <strain>ATCC BAA-935 / AF2122/97</strain>
    </source>
</reference>
<keyword id="KW-0028">Amino-acid biosynthesis</keyword>
<keyword id="KW-0057">Aromatic amino acid biosynthesis</keyword>
<keyword id="KW-0456">Lyase</keyword>
<keyword id="KW-1185">Reference proteome</keyword>
<feature type="initiator methionine" description="Removed" evidence="1">
    <location>
        <position position="1"/>
    </location>
</feature>
<feature type="chain" id="PRO_0000159907" description="3-dehydroquinate dehydratase">
    <location>
        <begin position="2"/>
        <end position="147"/>
    </location>
</feature>
<feature type="active site" description="Proton acceptor" evidence="1">
    <location>
        <position position="25"/>
    </location>
</feature>
<feature type="active site" description="Proton donor" evidence="1">
    <location>
        <position position="102"/>
    </location>
</feature>
<feature type="binding site" evidence="1">
    <location>
        <position position="76"/>
    </location>
    <ligand>
        <name>substrate</name>
    </ligand>
</feature>
<feature type="binding site" evidence="1">
    <location>
        <position position="82"/>
    </location>
    <ligand>
        <name>substrate</name>
    </ligand>
</feature>
<feature type="binding site" evidence="1">
    <location>
        <position position="89"/>
    </location>
    <ligand>
        <name>substrate</name>
    </ligand>
</feature>
<feature type="binding site" evidence="1">
    <location>
        <begin position="103"/>
        <end position="104"/>
    </location>
    <ligand>
        <name>substrate</name>
    </ligand>
</feature>
<feature type="binding site" evidence="1">
    <location>
        <position position="113"/>
    </location>
    <ligand>
        <name>substrate</name>
    </ligand>
</feature>
<feature type="site" description="Transition state stabilizer" evidence="1">
    <location>
        <position position="20"/>
    </location>
</feature>
<accession>P0A4Z7</accession>
<accession>A0A1R3Y1G7</accession>
<accession>P36918</accession>
<accession>P95016</accession>
<accession>X2BL19</accession>
<dbReference type="EC" id="4.2.1.10"/>
<dbReference type="EMBL" id="LT708304">
    <property type="protein sequence ID" value="SIU01183.1"/>
    <property type="molecule type" value="Genomic_DNA"/>
</dbReference>
<dbReference type="RefSeq" id="NP_856212.1">
    <property type="nucleotide sequence ID" value="NC_002945.3"/>
</dbReference>
<dbReference type="RefSeq" id="WP_003413001.1">
    <property type="nucleotide sequence ID" value="NC_002945.4"/>
</dbReference>
<dbReference type="SMR" id="P0A4Z7"/>
<dbReference type="KEGG" id="mbo:BQ2027_MB2566C"/>
<dbReference type="PATRIC" id="fig|233413.5.peg.2823"/>
<dbReference type="UniPathway" id="UPA00053">
    <property type="reaction ID" value="UER00086"/>
</dbReference>
<dbReference type="Proteomes" id="UP000001419">
    <property type="component" value="Chromosome"/>
</dbReference>
<dbReference type="GO" id="GO:0003855">
    <property type="term" value="F:3-dehydroquinate dehydratase activity"/>
    <property type="evidence" value="ECO:0007669"/>
    <property type="project" value="UniProtKB-UniRule"/>
</dbReference>
<dbReference type="GO" id="GO:0008652">
    <property type="term" value="P:amino acid biosynthetic process"/>
    <property type="evidence" value="ECO:0007669"/>
    <property type="project" value="UniProtKB-KW"/>
</dbReference>
<dbReference type="GO" id="GO:0009073">
    <property type="term" value="P:aromatic amino acid family biosynthetic process"/>
    <property type="evidence" value="ECO:0007669"/>
    <property type="project" value="UniProtKB-KW"/>
</dbReference>
<dbReference type="GO" id="GO:0009423">
    <property type="term" value="P:chorismate biosynthetic process"/>
    <property type="evidence" value="ECO:0007669"/>
    <property type="project" value="UniProtKB-UniRule"/>
</dbReference>
<dbReference type="GO" id="GO:0019631">
    <property type="term" value="P:quinate catabolic process"/>
    <property type="evidence" value="ECO:0007669"/>
    <property type="project" value="TreeGrafter"/>
</dbReference>
<dbReference type="CDD" id="cd00466">
    <property type="entry name" value="DHQase_II"/>
    <property type="match status" value="1"/>
</dbReference>
<dbReference type="FunFam" id="3.40.50.9100:FF:000001">
    <property type="entry name" value="3-dehydroquinate dehydratase"/>
    <property type="match status" value="1"/>
</dbReference>
<dbReference type="Gene3D" id="3.40.50.9100">
    <property type="entry name" value="Dehydroquinase, class II"/>
    <property type="match status" value="1"/>
</dbReference>
<dbReference type="HAMAP" id="MF_00169">
    <property type="entry name" value="AroQ"/>
    <property type="match status" value="1"/>
</dbReference>
<dbReference type="InterPro" id="IPR001874">
    <property type="entry name" value="DHquinase_II"/>
</dbReference>
<dbReference type="InterPro" id="IPR018509">
    <property type="entry name" value="DHquinase_II_CS"/>
</dbReference>
<dbReference type="InterPro" id="IPR036441">
    <property type="entry name" value="DHquinase_II_sf"/>
</dbReference>
<dbReference type="NCBIfam" id="TIGR01088">
    <property type="entry name" value="aroQ"/>
    <property type="match status" value="1"/>
</dbReference>
<dbReference type="NCBIfam" id="NF003805">
    <property type="entry name" value="PRK05395.1-2"/>
    <property type="match status" value="1"/>
</dbReference>
<dbReference type="NCBIfam" id="NF003806">
    <property type="entry name" value="PRK05395.1-3"/>
    <property type="match status" value="1"/>
</dbReference>
<dbReference type="NCBIfam" id="NF003807">
    <property type="entry name" value="PRK05395.1-4"/>
    <property type="match status" value="1"/>
</dbReference>
<dbReference type="PANTHER" id="PTHR21272">
    <property type="entry name" value="CATABOLIC 3-DEHYDROQUINASE"/>
    <property type="match status" value="1"/>
</dbReference>
<dbReference type="PANTHER" id="PTHR21272:SF3">
    <property type="entry name" value="CATABOLIC 3-DEHYDROQUINASE"/>
    <property type="match status" value="1"/>
</dbReference>
<dbReference type="Pfam" id="PF01220">
    <property type="entry name" value="DHquinase_II"/>
    <property type="match status" value="1"/>
</dbReference>
<dbReference type="PIRSF" id="PIRSF001399">
    <property type="entry name" value="DHquinase_II"/>
    <property type="match status" value="1"/>
</dbReference>
<dbReference type="SUPFAM" id="SSF52304">
    <property type="entry name" value="Type II 3-dehydroquinate dehydratase"/>
    <property type="match status" value="1"/>
</dbReference>
<dbReference type="PROSITE" id="PS01029">
    <property type="entry name" value="DEHYDROQUINASE_II"/>
    <property type="match status" value="1"/>
</dbReference>
<sequence>MSELIVNVINGPNLGRLGRREPAVYGGTTHDELVALIEREAAELGLKAVVRQSDSEAQLLDWIHQAADAAEPVILNAGGLTHTSVALRDACAELSAPLIEVHISNVHAREEFRRHSYLSPIATGVIVGLGIQGYLLALRYLAEHVGT</sequence>
<comment type="function">
    <text evidence="1">Catalyzes a trans-dehydration via an enolate intermediate.</text>
</comment>
<comment type="catalytic activity">
    <reaction>
        <text>3-dehydroquinate = 3-dehydroshikimate + H2O</text>
        <dbReference type="Rhea" id="RHEA:21096"/>
        <dbReference type="ChEBI" id="CHEBI:15377"/>
        <dbReference type="ChEBI" id="CHEBI:16630"/>
        <dbReference type="ChEBI" id="CHEBI:32364"/>
        <dbReference type="EC" id="4.2.1.10"/>
    </reaction>
</comment>
<comment type="pathway">
    <text>Metabolic intermediate biosynthesis; chorismate biosynthesis; chorismate from D-erythrose 4-phosphate and phosphoenolpyruvate: step 3/7.</text>
</comment>
<comment type="subunit">
    <text evidence="1">Homododecamer.</text>
</comment>
<comment type="similarity">
    <text evidence="2">Belongs to the type-II 3-dehydroquinase family.</text>
</comment>
<evidence type="ECO:0000250" key="1"/>
<evidence type="ECO:0000305" key="2"/>
<protein>
    <recommendedName>
        <fullName>3-dehydroquinate dehydratase</fullName>
        <shortName>3-dehydroquinase</shortName>
        <ecNumber>4.2.1.10</ecNumber>
    </recommendedName>
    <alternativeName>
        <fullName>Type II DHQase</fullName>
    </alternativeName>
</protein>
<organism>
    <name type="scientific">Mycobacterium bovis (strain ATCC BAA-935 / AF2122/97)</name>
    <dbReference type="NCBI Taxonomy" id="233413"/>
    <lineage>
        <taxon>Bacteria</taxon>
        <taxon>Bacillati</taxon>
        <taxon>Actinomycetota</taxon>
        <taxon>Actinomycetes</taxon>
        <taxon>Mycobacteriales</taxon>
        <taxon>Mycobacteriaceae</taxon>
        <taxon>Mycobacterium</taxon>
        <taxon>Mycobacterium tuberculosis complex</taxon>
    </lineage>
</organism>
<gene>
    <name type="primary">aroQ</name>
    <name type="synonym">aroD</name>
    <name type="ordered locus">BQ2027_MB2566C</name>
</gene>
<name>AROQ_MYCBO</name>
<proteinExistence type="inferred from homology"/>